<proteinExistence type="inferred from homology"/>
<comment type="function">
    <text evidence="1">Sequence-specific transcription factor which is part of a developmental regulatory system that provides cells with specific positional identities on the anterior-posterior axis.</text>
</comment>
<comment type="subcellular location">
    <subcellularLocation>
        <location evidence="2">Nucleus</location>
    </subcellularLocation>
</comment>
<comment type="similarity">
    <text evidence="3">Belongs to the Antp homeobox family.</text>
</comment>
<sequence>RKRGSQTYTRYQTLELEKEFHFNRYLTRRRRVEIAHVLCLTERQIKIWFQNRRMKWKKDHKDESSSSNLSANSEN</sequence>
<name>HXA7_SALSA</name>
<dbReference type="EMBL" id="M18903">
    <property type="protein sequence ID" value="AAA49559.1"/>
    <property type="molecule type" value="Genomic_DNA"/>
</dbReference>
<dbReference type="PIR" id="I51341">
    <property type="entry name" value="I51341"/>
</dbReference>
<dbReference type="SMR" id="P09636"/>
<dbReference type="STRING" id="8030.ENSSSAP00000054417"/>
<dbReference type="PaxDb" id="8030-ENSSSAP00000012125"/>
<dbReference type="Proteomes" id="UP000087266">
    <property type="component" value="Unplaced"/>
</dbReference>
<dbReference type="GO" id="GO:0005634">
    <property type="term" value="C:nucleus"/>
    <property type="evidence" value="ECO:0007669"/>
    <property type="project" value="UniProtKB-SubCell"/>
</dbReference>
<dbReference type="GO" id="GO:0000981">
    <property type="term" value="F:DNA-binding transcription factor activity, RNA polymerase II-specific"/>
    <property type="evidence" value="ECO:0007669"/>
    <property type="project" value="InterPro"/>
</dbReference>
<dbReference type="GO" id="GO:0000978">
    <property type="term" value="F:RNA polymerase II cis-regulatory region sequence-specific DNA binding"/>
    <property type="evidence" value="ECO:0007669"/>
    <property type="project" value="TreeGrafter"/>
</dbReference>
<dbReference type="GO" id="GO:0009952">
    <property type="term" value="P:anterior/posterior pattern specification"/>
    <property type="evidence" value="ECO:0007669"/>
    <property type="project" value="TreeGrafter"/>
</dbReference>
<dbReference type="CDD" id="cd00086">
    <property type="entry name" value="homeodomain"/>
    <property type="match status" value="1"/>
</dbReference>
<dbReference type="FunFam" id="1.10.10.60:FF:000017">
    <property type="entry name" value="Homeobox protein antennapedia"/>
    <property type="match status" value="1"/>
</dbReference>
<dbReference type="Gene3D" id="1.10.10.60">
    <property type="entry name" value="Homeodomain-like"/>
    <property type="match status" value="1"/>
</dbReference>
<dbReference type="InterPro" id="IPR050296">
    <property type="entry name" value="Antp_homeobox"/>
</dbReference>
<dbReference type="InterPro" id="IPR001356">
    <property type="entry name" value="HD"/>
</dbReference>
<dbReference type="InterPro" id="IPR020479">
    <property type="entry name" value="HD_metazoa"/>
</dbReference>
<dbReference type="InterPro" id="IPR017970">
    <property type="entry name" value="Homeobox_CS"/>
</dbReference>
<dbReference type="InterPro" id="IPR009057">
    <property type="entry name" value="Homeodomain-like_sf"/>
</dbReference>
<dbReference type="PANTHER" id="PTHR45659">
    <property type="entry name" value="HOMEOBOX PROTEIN HOX"/>
    <property type="match status" value="1"/>
</dbReference>
<dbReference type="PANTHER" id="PTHR45659:SF10">
    <property type="entry name" value="HOMEOBOX PROTEIN HOX-A5"/>
    <property type="match status" value="1"/>
</dbReference>
<dbReference type="Pfam" id="PF00046">
    <property type="entry name" value="Homeodomain"/>
    <property type="match status" value="1"/>
</dbReference>
<dbReference type="PRINTS" id="PR00024">
    <property type="entry name" value="HOMEOBOX"/>
</dbReference>
<dbReference type="SMART" id="SM00389">
    <property type="entry name" value="HOX"/>
    <property type="match status" value="1"/>
</dbReference>
<dbReference type="SUPFAM" id="SSF46689">
    <property type="entry name" value="Homeodomain-like"/>
    <property type="match status" value="1"/>
</dbReference>
<dbReference type="PROSITE" id="PS00027">
    <property type="entry name" value="HOMEOBOX_1"/>
    <property type="match status" value="1"/>
</dbReference>
<dbReference type="PROSITE" id="PS50071">
    <property type="entry name" value="HOMEOBOX_2"/>
    <property type="match status" value="1"/>
</dbReference>
<evidence type="ECO:0000250" key="1"/>
<evidence type="ECO:0000255" key="2">
    <source>
        <dbReference type="PROSITE-ProRule" id="PRU00108"/>
    </source>
</evidence>
<evidence type="ECO:0000305" key="3"/>
<organism>
    <name type="scientific">Salmo salar</name>
    <name type="common">Atlantic salmon</name>
    <dbReference type="NCBI Taxonomy" id="8030"/>
    <lineage>
        <taxon>Eukaryota</taxon>
        <taxon>Metazoa</taxon>
        <taxon>Chordata</taxon>
        <taxon>Craniata</taxon>
        <taxon>Vertebrata</taxon>
        <taxon>Euteleostomi</taxon>
        <taxon>Actinopterygii</taxon>
        <taxon>Neopterygii</taxon>
        <taxon>Teleostei</taxon>
        <taxon>Protacanthopterygii</taxon>
        <taxon>Salmoniformes</taxon>
        <taxon>Salmonidae</taxon>
        <taxon>Salmoninae</taxon>
        <taxon>Salmo</taxon>
    </lineage>
</organism>
<feature type="chain" id="PRO_0000049078" description="Homeobox protein Hox-A7">
    <location>
        <begin position="1" status="less than"/>
        <end position="75" status="greater than"/>
    </location>
</feature>
<feature type="DNA-binding region" description="Homeobox" evidence="2">
    <location>
        <begin position="1"/>
        <end position="60"/>
    </location>
</feature>
<feature type="non-terminal residue">
    <location>
        <position position="1"/>
    </location>
</feature>
<feature type="non-terminal residue">
    <location>
        <position position="75"/>
    </location>
</feature>
<gene>
    <name type="primary">hoxa7</name>
</gene>
<keyword id="KW-0217">Developmental protein</keyword>
<keyword id="KW-0238">DNA-binding</keyword>
<keyword id="KW-0371">Homeobox</keyword>
<keyword id="KW-0539">Nucleus</keyword>
<keyword id="KW-1185">Reference proteome</keyword>
<keyword id="KW-0804">Transcription</keyword>
<keyword id="KW-0805">Transcription regulation</keyword>
<reference key="1">
    <citation type="journal article" date="1988" name="Gene">
        <title>Molecular cloning and characterization of homeo-box-containing genes from Atlantic salmon.</title>
        <authorList>
            <person name="Fjose A."/>
            <person name="Molven A."/>
            <person name="Eiken H.G."/>
        </authorList>
    </citation>
    <scope>NUCLEOTIDE SEQUENCE [GENOMIC DNA]</scope>
</reference>
<protein>
    <recommendedName>
        <fullName>Homeobox protein Hox-A7</fullName>
    </recommendedName>
    <alternativeName>
        <fullName>Homeobox protein S12-A</fullName>
    </alternativeName>
</protein>
<accession>P09636</accession>